<comment type="function">
    <text evidence="2">One of the essential components for the initiation of protein synthesis. Protects formylmethionyl-tRNA from spontaneous hydrolysis and promotes its binding to the 30S ribosomal subunits. Also involved in the hydrolysis of GTP during the formation of the 70S ribosomal complex.</text>
</comment>
<comment type="subcellular location">
    <subcellularLocation>
        <location evidence="2">Cytoplasm</location>
    </subcellularLocation>
</comment>
<comment type="similarity">
    <text evidence="2">Belongs to the TRAFAC class translation factor GTPase superfamily. Classic translation factor GTPase family. IF-2 subfamily.</text>
</comment>
<accession>A1UU50</accession>
<feature type="chain" id="PRO_1000008201" description="Translation initiation factor IF-2">
    <location>
        <begin position="1"/>
        <end position="848"/>
    </location>
</feature>
<feature type="domain" description="tr-type G">
    <location>
        <begin position="346"/>
        <end position="513"/>
    </location>
</feature>
<feature type="region of interest" description="Disordered" evidence="3">
    <location>
        <begin position="1"/>
        <end position="79"/>
    </location>
</feature>
<feature type="region of interest" description="Disordered" evidence="3">
    <location>
        <begin position="121"/>
        <end position="163"/>
    </location>
</feature>
<feature type="region of interest" description="G1" evidence="1">
    <location>
        <begin position="355"/>
        <end position="362"/>
    </location>
</feature>
<feature type="region of interest" description="G2" evidence="1">
    <location>
        <begin position="380"/>
        <end position="384"/>
    </location>
</feature>
<feature type="region of interest" description="G3" evidence="1">
    <location>
        <begin position="401"/>
        <end position="404"/>
    </location>
</feature>
<feature type="region of interest" description="G4" evidence="1">
    <location>
        <begin position="455"/>
        <end position="458"/>
    </location>
</feature>
<feature type="region of interest" description="G5" evidence="1">
    <location>
        <begin position="491"/>
        <end position="493"/>
    </location>
</feature>
<feature type="compositionally biased region" description="Basic and acidic residues" evidence="3">
    <location>
        <begin position="1"/>
        <end position="10"/>
    </location>
</feature>
<feature type="compositionally biased region" description="Polar residues" evidence="3">
    <location>
        <begin position="17"/>
        <end position="33"/>
    </location>
</feature>
<feature type="compositionally biased region" description="Basic and acidic residues" evidence="3">
    <location>
        <begin position="121"/>
        <end position="138"/>
    </location>
</feature>
<feature type="compositionally biased region" description="Polar residues" evidence="3">
    <location>
        <begin position="149"/>
        <end position="163"/>
    </location>
</feature>
<feature type="binding site" evidence="2">
    <location>
        <begin position="355"/>
        <end position="362"/>
    </location>
    <ligand>
        <name>GTP</name>
        <dbReference type="ChEBI" id="CHEBI:37565"/>
    </ligand>
</feature>
<feature type="binding site" evidence="2">
    <location>
        <begin position="401"/>
        <end position="405"/>
    </location>
    <ligand>
        <name>GTP</name>
        <dbReference type="ChEBI" id="CHEBI:37565"/>
    </ligand>
</feature>
<feature type="binding site" evidence="2">
    <location>
        <begin position="455"/>
        <end position="458"/>
    </location>
    <ligand>
        <name>GTP</name>
        <dbReference type="ChEBI" id="CHEBI:37565"/>
    </ligand>
</feature>
<evidence type="ECO:0000250" key="1"/>
<evidence type="ECO:0000255" key="2">
    <source>
        <dbReference type="HAMAP-Rule" id="MF_00100"/>
    </source>
</evidence>
<evidence type="ECO:0000256" key="3">
    <source>
        <dbReference type="SAM" id="MobiDB-lite"/>
    </source>
</evidence>
<organism>
    <name type="scientific">Bartonella bacilliformis (strain ATCC 35685 / KC583 / Herrer 020/F12,63)</name>
    <dbReference type="NCBI Taxonomy" id="360095"/>
    <lineage>
        <taxon>Bacteria</taxon>
        <taxon>Pseudomonadati</taxon>
        <taxon>Pseudomonadota</taxon>
        <taxon>Alphaproteobacteria</taxon>
        <taxon>Hyphomicrobiales</taxon>
        <taxon>Bartonellaceae</taxon>
        <taxon>Bartonella</taxon>
    </lineage>
</organism>
<gene>
    <name evidence="2" type="primary">infB</name>
    <name type="ordered locus">BARBAKC583_1254</name>
</gene>
<keyword id="KW-0963">Cytoplasm</keyword>
<keyword id="KW-0342">GTP-binding</keyword>
<keyword id="KW-0396">Initiation factor</keyword>
<keyword id="KW-0547">Nucleotide-binding</keyword>
<keyword id="KW-0648">Protein biosynthesis</keyword>
<sequence>MSENNNDKITAKKTLTLKRSGSETNTVKQNFNHSRTKAVVVETKRRKIARPDEKTEMPQPITKPHVAPPRSKPRIEKPVLVTPTAQSNLSSTEMDARLRALEEAHIQDEIIRKQAAEKQIAERQAAEKQAKESEEGLHLQKTHKEKIQKSSSNTTKPTPLFSSTVSPIESIEAALTLKNTAASKRKADENDDDEKYNRRANLSKSEIRAPKIIKGTDERRRGKLTLNSALDEEGNSRGRSMAAMRRRQEKFKRAQNQEPREKISREVILPETITIQELAQRMAERSVDVIKFLMKQEQMMKPGDVIDADIAELIAIEFGHTVKRVSESDIEEGIFNVDDDPQKMKTRPPIVTIMGHVDHGKTSLLDAIRKANVVSSEAGGITQHIGAYQVEQNGQKITFIDTPGHAAFTAMRARGAQITDIAVLVVAADDSVMPQTIESINHAKAANVPIIVAINKIDKPTADAQKVRTELLQHEVFVETMGGETLEVEVSAKTGQNLDKLLEAILLQAEILDLKADSERTADGIVIEAKLDQGRGSVATVLVQKGTLHLSDIIVAGNEWGRIRALIDDHGNHIKTASPSTPVEILGMQGTPQAGDRFAVVAHEAKAREIAEYRQRLARDKAAARKTGSRSSLEQMMTKLQTVGVKEFSLIIKGDVQGSIEAITAALEKLGNEEVQTRIVHSGAGGITESDISLAETSNSVVIGFNVRANKQVRDLAETQGIEIRYYNIIYDLVDDIKAAMSGLLSPEKRETFLGNAEILEIFNITKIGKVAGCQVTEGKIERGAGVRLIRDNIVIHEGKLKTLKRFKDEVNEVQIGQECGIAFEKYEDMRAGDTIEIFRVEHVNRTL</sequence>
<dbReference type="EMBL" id="CP000524">
    <property type="protein sequence ID" value="ABM45132.1"/>
    <property type="molecule type" value="Genomic_DNA"/>
</dbReference>
<dbReference type="RefSeq" id="WP_005767983.1">
    <property type="nucleotide sequence ID" value="NC_008783.1"/>
</dbReference>
<dbReference type="SMR" id="A1UU50"/>
<dbReference type="STRING" id="360095.BARBAKC583_1254"/>
<dbReference type="GeneID" id="4683866"/>
<dbReference type="KEGG" id="bbk:BARBAKC583_1254"/>
<dbReference type="PATRIC" id="fig|360095.6.peg.1230"/>
<dbReference type="eggNOG" id="COG0532">
    <property type="taxonomic scope" value="Bacteria"/>
</dbReference>
<dbReference type="HOGENOM" id="CLU_006301_10_0_5"/>
<dbReference type="OrthoDB" id="9811804at2"/>
<dbReference type="Proteomes" id="UP000000643">
    <property type="component" value="Chromosome"/>
</dbReference>
<dbReference type="GO" id="GO:0005829">
    <property type="term" value="C:cytosol"/>
    <property type="evidence" value="ECO:0007669"/>
    <property type="project" value="TreeGrafter"/>
</dbReference>
<dbReference type="GO" id="GO:0005525">
    <property type="term" value="F:GTP binding"/>
    <property type="evidence" value="ECO:0007669"/>
    <property type="project" value="UniProtKB-KW"/>
</dbReference>
<dbReference type="GO" id="GO:0003924">
    <property type="term" value="F:GTPase activity"/>
    <property type="evidence" value="ECO:0007669"/>
    <property type="project" value="UniProtKB-UniRule"/>
</dbReference>
<dbReference type="GO" id="GO:0097216">
    <property type="term" value="F:guanosine tetraphosphate binding"/>
    <property type="evidence" value="ECO:0007669"/>
    <property type="project" value="UniProtKB-ARBA"/>
</dbReference>
<dbReference type="GO" id="GO:0003743">
    <property type="term" value="F:translation initiation factor activity"/>
    <property type="evidence" value="ECO:0007669"/>
    <property type="project" value="UniProtKB-UniRule"/>
</dbReference>
<dbReference type="CDD" id="cd01887">
    <property type="entry name" value="IF2_eIF5B"/>
    <property type="match status" value="1"/>
</dbReference>
<dbReference type="CDD" id="cd03702">
    <property type="entry name" value="IF2_mtIF2_II"/>
    <property type="match status" value="1"/>
</dbReference>
<dbReference type="CDD" id="cd03692">
    <property type="entry name" value="mtIF2_IVc"/>
    <property type="match status" value="1"/>
</dbReference>
<dbReference type="FunFam" id="2.40.30.10:FF:000007">
    <property type="entry name" value="Translation initiation factor IF-2"/>
    <property type="match status" value="1"/>
</dbReference>
<dbReference type="FunFam" id="2.40.30.10:FF:000008">
    <property type="entry name" value="Translation initiation factor IF-2"/>
    <property type="match status" value="1"/>
</dbReference>
<dbReference type="FunFam" id="3.40.50.10050:FF:000001">
    <property type="entry name" value="Translation initiation factor IF-2"/>
    <property type="match status" value="1"/>
</dbReference>
<dbReference type="FunFam" id="3.40.50.300:FF:000019">
    <property type="entry name" value="Translation initiation factor IF-2"/>
    <property type="match status" value="1"/>
</dbReference>
<dbReference type="Gene3D" id="3.40.50.300">
    <property type="entry name" value="P-loop containing nucleotide triphosphate hydrolases"/>
    <property type="match status" value="1"/>
</dbReference>
<dbReference type="Gene3D" id="2.40.30.10">
    <property type="entry name" value="Translation factors"/>
    <property type="match status" value="2"/>
</dbReference>
<dbReference type="Gene3D" id="3.40.50.10050">
    <property type="entry name" value="Translation initiation factor IF- 2, domain 3"/>
    <property type="match status" value="1"/>
</dbReference>
<dbReference type="HAMAP" id="MF_00100_B">
    <property type="entry name" value="IF_2_B"/>
    <property type="match status" value="1"/>
</dbReference>
<dbReference type="InterPro" id="IPR053905">
    <property type="entry name" value="EF-G-like_DII"/>
</dbReference>
<dbReference type="InterPro" id="IPR004161">
    <property type="entry name" value="EFTu-like_2"/>
</dbReference>
<dbReference type="InterPro" id="IPR013575">
    <property type="entry name" value="IF2_assoc_dom_bac"/>
</dbReference>
<dbReference type="InterPro" id="IPR044145">
    <property type="entry name" value="IF2_II"/>
</dbReference>
<dbReference type="InterPro" id="IPR006847">
    <property type="entry name" value="IF2_N"/>
</dbReference>
<dbReference type="InterPro" id="IPR027417">
    <property type="entry name" value="P-loop_NTPase"/>
</dbReference>
<dbReference type="InterPro" id="IPR005225">
    <property type="entry name" value="Small_GTP-bd"/>
</dbReference>
<dbReference type="InterPro" id="IPR000795">
    <property type="entry name" value="T_Tr_GTP-bd_dom"/>
</dbReference>
<dbReference type="InterPro" id="IPR000178">
    <property type="entry name" value="TF_IF2_bacterial-like"/>
</dbReference>
<dbReference type="InterPro" id="IPR015760">
    <property type="entry name" value="TIF_IF2"/>
</dbReference>
<dbReference type="InterPro" id="IPR023115">
    <property type="entry name" value="TIF_IF2_dom3"/>
</dbReference>
<dbReference type="InterPro" id="IPR036925">
    <property type="entry name" value="TIF_IF2_dom3_sf"/>
</dbReference>
<dbReference type="InterPro" id="IPR009000">
    <property type="entry name" value="Transl_B-barrel_sf"/>
</dbReference>
<dbReference type="NCBIfam" id="TIGR00487">
    <property type="entry name" value="IF-2"/>
    <property type="match status" value="1"/>
</dbReference>
<dbReference type="NCBIfam" id="TIGR00231">
    <property type="entry name" value="small_GTP"/>
    <property type="match status" value="1"/>
</dbReference>
<dbReference type="PANTHER" id="PTHR43381:SF5">
    <property type="entry name" value="TR-TYPE G DOMAIN-CONTAINING PROTEIN"/>
    <property type="match status" value="1"/>
</dbReference>
<dbReference type="PANTHER" id="PTHR43381">
    <property type="entry name" value="TRANSLATION INITIATION FACTOR IF-2-RELATED"/>
    <property type="match status" value="1"/>
</dbReference>
<dbReference type="Pfam" id="PF22042">
    <property type="entry name" value="EF-G_D2"/>
    <property type="match status" value="1"/>
</dbReference>
<dbReference type="Pfam" id="PF00009">
    <property type="entry name" value="GTP_EFTU"/>
    <property type="match status" value="1"/>
</dbReference>
<dbReference type="Pfam" id="PF03144">
    <property type="entry name" value="GTP_EFTU_D2"/>
    <property type="match status" value="1"/>
</dbReference>
<dbReference type="Pfam" id="PF11987">
    <property type="entry name" value="IF-2"/>
    <property type="match status" value="1"/>
</dbReference>
<dbReference type="Pfam" id="PF08364">
    <property type="entry name" value="IF2_assoc"/>
    <property type="match status" value="1"/>
</dbReference>
<dbReference type="Pfam" id="PF04760">
    <property type="entry name" value="IF2_N"/>
    <property type="match status" value="1"/>
</dbReference>
<dbReference type="SUPFAM" id="SSF52156">
    <property type="entry name" value="Initiation factor IF2/eIF5b, domain 3"/>
    <property type="match status" value="1"/>
</dbReference>
<dbReference type="SUPFAM" id="SSF52540">
    <property type="entry name" value="P-loop containing nucleoside triphosphate hydrolases"/>
    <property type="match status" value="1"/>
</dbReference>
<dbReference type="SUPFAM" id="SSF50447">
    <property type="entry name" value="Translation proteins"/>
    <property type="match status" value="2"/>
</dbReference>
<dbReference type="PROSITE" id="PS51722">
    <property type="entry name" value="G_TR_2"/>
    <property type="match status" value="1"/>
</dbReference>
<dbReference type="PROSITE" id="PS01176">
    <property type="entry name" value="IF2"/>
    <property type="match status" value="1"/>
</dbReference>
<reference key="1">
    <citation type="submission" date="2006-12" db="EMBL/GenBank/DDBJ databases">
        <authorList>
            <person name="Hendrix L."/>
            <person name="Mohamoud Y."/>
            <person name="Radune D."/>
            <person name="Shvartsbeyn A."/>
            <person name="Daugherty S."/>
            <person name="Dodson R."/>
            <person name="Durkin A.S."/>
            <person name="Harkins D."/>
            <person name="Huot H."/>
            <person name="Kothari S.P."/>
            <person name="Madupu R."/>
            <person name="Li J."/>
            <person name="Nelson W.C."/>
            <person name="Shrivastava S."/>
            <person name="Giglio M.G."/>
            <person name="Haft D."/>
            <person name="Selengut J."/>
            <person name="Fraser-Ligget C."/>
            <person name="Seshadri R."/>
        </authorList>
    </citation>
    <scope>NUCLEOTIDE SEQUENCE [LARGE SCALE GENOMIC DNA]</scope>
    <source>
        <strain>ATCC 35685 / KC583 / Herrer 020/F12,63</strain>
    </source>
</reference>
<proteinExistence type="inferred from homology"/>
<name>IF2_BARBK</name>
<protein>
    <recommendedName>
        <fullName evidence="2">Translation initiation factor IF-2</fullName>
    </recommendedName>
</protein>